<proteinExistence type="inferred from homology"/>
<keyword id="KW-0687">Ribonucleoprotein</keyword>
<keyword id="KW-0689">Ribosomal protein</keyword>
<keyword id="KW-0694">RNA-binding</keyword>
<keyword id="KW-0699">rRNA-binding</keyword>
<comment type="function">
    <text evidence="1">One of the primary rRNA binding proteins, it binds directly near the 3'-end of the 23S rRNA, where it nucleates assembly of the 50S subunit.</text>
</comment>
<comment type="subunit">
    <text evidence="1">Part of the 50S ribosomal subunit. Forms a cluster with proteins L14 and L19.</text>
</comment>
<comment type="similarity">
    <text evidence="1">Belongs to the universal ribosomal protein uL3 family.</text>
</comment>
<reference key="1">
    <citation type="journal article" date="2004" name="Proc. Natl. Acad. Sci. U.S.A.">
        <title>Genomic analysis of Bacteroides fragilis reveals extensive DNA inversions regulating cell surface adaptation.</title>
        <authorList>
            <person name="Kuwahara T."/>
            <person name="Yamashita A."/>
            <person name="Hirakawa H."/>
            <person name="Nakayama H."/>
            <person name="Toh H."/>
            <person name="Okada N."/>
            <person name="Kuhara S."/>
            <person name="Hattori M."/>
            <person name="Hayashi T."/>
            <person name="Ohnishi Y."/>
        </authorList>
    </citation>
    <scope>NUCLEOTIDE SEQUENCE [LARGE SCALE GENOMIC DNA]</scope>
    <source>
        <strain>YCH46</strain>
    </source>
</reference>
<organism>
    <name type="scientific">Bacteroides fragilis (strain YCH46)</name>
    <dbReference type="NCBI Taxonomy" id="295405"/>
    <lineage>
        <taxon>Bacteria</taxon>
        <taxon>Pseudomonadati</taxon>
        <taxon>Bacteroidota</taxon>
        <taxon>Bacteroidia</taxon>
        <taxon>Bacteroidales</taxon>
        <taxon>Bacteroidaceae</taxon>
        <taxon>Bacteroides</taxon>
    </lineage>
</organism>
<sequence>MPGLLGKKIGMTSVFSADGKNVPCTVIEAGPCVVTQVKTVEKDGYAAVQLGFQDKKEKHTTKPLMGHFKKAGVTPKRHLAEFKEFENELNLGDTVTVELFDGADYVDVVGTSKGKGFQGVVKRHGFGGVGQSTHGQHNRARKPGSIGACSYPAKVFKGMRMGGQMGGDRVTVQNLQVLKVIAEHNLLLIKGSVPGCKGSIVLIEK</sequence>
<protein>
    <recommendedName>
        <fullName evidence="1">Large ribosomal subunit protein uL3</fullName>
    </recommendedName>
    <alternativeName>
        <fullName evidence="2">50S ribosomal protein L3</fullName>
    </alternativeName>
</protein>
<gene>
    <name evidence="1" type="primary">rplC</name>
    <name type="ordered locus">BF4181</name>
</gene>
<feature type="chain" id="PRO_0000241315" description="Large ribosomal subunit protein uL3">
    <location>
        <begin position="1"/>
        <end position="205"/>
    </location>
</feature>
<name>RL3_BACFR</name>
<accession>Q64NK8</accession>
<evidence type="ECO:0000255" key="1">
    <source>
        <dbReference type="HAMAP-Rule" id="MF_01325"/>
    </source>
</evidence>
<evidence type="ECO:0000305" key="2"/>
<dbReference type="EMBL" id="AP006841">
    <property type="protein sequence ID" value="BAD50924.1"/>
    <property type="molecule type" value="Genomic_DNA"/>
</dbReference>
<dbReference type="RefSeq" id="WP_005782189.1">
    <property type="nucleotide sequence ID" value="NZ_UYXF01000007.1"/>
</dbReference>
<dbReference type="RefSeq" id="YP_101458.1">
    <property type="nucleotide sequence ID" value="NC_006347.1"/>
</dbReference>
<dbReference type="SMR" id="Q64NK8"/>
<dbReference type="STRING" id="295405.BF4181"/>
<dbReference type="GeneID" id="93105324"/>
<dbReference type="KEGG" id="bfr:BF4181"/>
<dbReference type="PATRIC" id="fig|295405.11.peg.4035"/>
<dbReference type="HOGENOM" id="CLU_044142_4_1_10"/>
<dbReference type="OrthoDB" id="9806135at2"/>
<dbReference type="Proteomes" id="UP000002197">
    <property type="component" value="Chromosome"/>
</dbReference>
<dbReference type="GO" id="GO:0022625">
    <property type="term" value="C:cytosolic large ribosomal subunit"/>
    <property type="evidence" value="ECO:0007669"/>
    <property type="project" value="TreeGrafter"/>
</dbReference>
<dbReference type="GO" id="GO:0019843">
    <property type="term" value="F:rRNA binding"/>
    <property type="evidence" value="ECO:0007669"/>
    <property type="project" value="UniProtKB-UniRule"/>
</dbReference>
<dbReference type="GO" id="GO:0003735">
    <property type="term" value="F:structural constituent of ribosome"/>
    <property type="evidence" value="ECO:0007669"/>
    <property type="project" value="InterPro"/>
</dbReference>
<dbReference type="GO" id="GO:0006412">
    <property type="term" value="P:translation"/>
    <property type="evidence" value="ECO:0007669"/>
    <property type="project" value="UniProtKB-UniRule"/>
</dbReference>
<dbReference type="FunFam" id="2.40.30.10:FF:000047">
    <property type="entry name" value="50S ribosomal protein L3"/>
    <property type="match status" value="1"/>
</dbReference>
<dbReference type="FunFam" id="3.30.160.810:FF:000001">
    <property type="entry name" value="50S ribosomal protein L3"/>
    <property type="match status" value="1"/>
</dbReference>
<dbReference type="Gene3D" id="3.30.160.810">
    <property type="match status" value="1"/>
</dbReference>
<dbReference type="Gene3D" id="2.40.30.10">
    <property type="entry name" value="Translation factors"/>
    <property type="match status" value="1"/>
</dbReference>
<dbReference type="HAMAP" id="MF_01325_B">
    <property type="entry name" value="Ribosomal_uL3_B"/>
    <property type="match status" value="1"/>
</dbReference>
<dbReference type="InterPro" id="IPR000597">
    <property type="entry name" value="Ribosomal_uL3"/>
</dbReference>
<dbReference type="InterPro" id="IPR019927">
    <property type="entry name" value="Ribosomal_uL3_bac/org-type"/>
</dbReference>
<dbReference type="InterPro" id="IPR019926">
    <property type="entry name" value="Ribosomal_uL3_CS"/>
</dbReference>
<dbReference type="InterPro" id="IPR009000">
    <property type="entry name" value="Transl_B-barrel_sf"/>
</dbReference>
<dbReference type="NCBIfam" id="TIGR03625">
    <property type="entry name" value="L3_bact"/>
    <property type="match status" value="1"/>
</dbReference>
<dbReference type="PANTHER" id="PTHR11229">
    <property type="entry name" value="50S RIBOSOMAL PROTEIN L3"/>
    <property type="match status" value="1"/>
</dbReference>
<dbReference type="PANTHER" id="PTHR11229:SF16">
    <property type="entry name" value="LARGE RIBOSOMAL SUBUNIT PROTEIN UL3C"/>
    <property type="match status" value="1"/>
</dbReference>
<dbReference type="Pfam" id="PF00297">
    <property type="entry name" value="Ribosomal_L3"/>
    <property type="match status" value="1"/>
</dbReference>
<dbReference type="SUPFAM" id="SSF50447">
    <property type="entry name" value="Translation proteins"/>
    <property type="match status" value="1"/>
</dbReference>
<dbReference type="PROSITE" id="PS00474">
    <property type="entry name" value="RIBOSOMAL_L3"/>
    <property type="match status" value="1"/>
</dbReference>